<accession>B6EMN5</accession>
<name>ARGE_ALISL</name>
<dbReference type="EC" id="3.5.1.16" evidence="1"/>
<dbReference type="EMBL" id="FM178379">
    <property type="protein sequence ID" value="CAQ80439.1"/>
    <property type="molecule type" value="Genomic_DNA"/>
</dbReference>
<dbReference type="RefSeq" id="WP_012551195.1">
    <property type="nucleotide sequence ID" value="NC_011312.1"/>
</dbReference>
<dbReference type="SMR" id="B6EMN5"/>
<dbReference type="KEGG" id="vsa:VSAL_I2755"/>
<dbReference type="eggNOG" id="COG0624">
    <property type="taxonomic scope" value="Bacteria"/>
</dbReference>
<dbReference type="HOGENOM" id="CLU_021802_2_4_6"/>
<dbReference type="UniPathway" id="UPA00068">
    <property type="reaction ID" value="UER00110"/>
</dbReference>
<dbReference type="Proteomes" id="UP000001730">
    <property type="component" value="Chromosome 1"/>
</dbReference>
<dbReference type="GO" id="GO:0005737">
    <property type="term" value="C:cytoplasm"/>
    <property type="evidence" value="ECO:0007669"/>
    <property type="project" value="UniProtKB-SubCell"/>
</dbReference>
<dbReference type="GO" id="GO:0008777">
    <property type="term" value="F:acetylornithine deacetylase activity"/>
    <property type="evidence" value="ECO:0007669"/>
    <property type="project" value="UniProtKB-UniRule"/>
</dbReference>
<dbReference type="GO" id="GO:0008270">
    <property type="term" value="F:zinc ion binding"/>
    <property type="evidence" value="ECO:0007669"/>
    <property type="project" value="UniProtKB-UniRule"/>
</dbReference>
<dbReference type="GO" id="GO:0006526">
    <property type="term" value="P:L-arginine biosynthetic process"/>
    <property type="evidence" value="ECO:0007669"/>
    <property type="project" value="UniProtKB-UniRule"/>
</dbReference>
<dbReference type="CDD" id="cd03894">
    <property type="entry name" value="M20_ArgE"/>
    <property type="match status" value="1"/>
</dbReference>
<dbReference type="FunFam" id="3.30.70.360:FF:000003">
    <property type="entry name" value="Acetylornithine deacetylase"/>
    <property type="match status" value="1"/>
</dbReference>
<dbReference type="Gene3D" id="3.30.70.360">
    <property type="match status" value="1"/>
</dbReference>
<dbReference type="Gene3D" id="3.40.630.10">
    <property type="entry name" value="Zn peptidases"/>
    <property type="match status" value="1"/>
</dbReference>
<dbReference type="HAMAP" id="MF_01108">
    <property type="entry name" value="ArgE"/>
    <property type="match status" value="1"/>
</dbReference>
<dbReference type="InterPro" id="IPR010169">
    <property type="entry name" value="AcOrn-deacetyl"/>
</dbReference>
<dbReference type="InterPro" id="IPR001261">
    <property type="entry name" value="ArgE/DapE_CS"/>
</dbReference>
<dbReference type="InterPro" id="IPR036264">
    <property type="entry name" value="Bact_exopeptidase_dim_dom"/>
</dbReference>
<dbReference type="InterPro" id="IPR002933">
    <property type="entry name" value="Peptidase_M20"/>
</dbReference>
<dbReference type="InterPro" id="IPR011650">
    <property type="entry name" value="Peptidase_M20_dimer"/>
</dbReference>
<dbReference type="InterPro" id="IPR050072">
    <property type="entry name" value="Peptidase_M20A"/>
</dbReference>
<dbReference type="NCBIfam" id="TIGR01892">
    <property type="entry name" value="AcOrn-deacetyl"/>
    <property type="match status" value="1"/>
</dbReference>
<dbReference type="NCBIfam" id="NF003474">
    <property type="entry name" value="PRK05111.1"/>
    <property type="match status" value="1"/>
</dbReference>
<dbReference type="PANTHER" id="PTHR43808">
    <property type="entry name" value="ACETYLORNITHINE DEACETYLASE"/>
    <property type="match status" value="1"/>
</dbReference>
<dbReference type="PANTHER" id="PTHR43808:SF1">
    <property type="entry name" value="ACETYLORNITHINE DEACETYLASE"/>
    <property type="match status" value="1"/>
</dbReference>
<dbReference type="Pfam" id="PF07687">
    <property type="entry name" value="M20_dimer"/>
    <property type="match status" value="1"/>
</dbReference>
<dbReference type="Pfam" id="PF01546">
    <property type="entry name" value="Peptidase_M20"/>
    <property type="match status" value="1"/>
</dbReference>
<dbReference type="SUPFAM" id="SSF55031">
    <property type="entry name" value="Bacterial exopeptidase dimerisation domain"/>
    <property type="match status" value="1"/>
</dbReference>
<dbReference type="SUPFAM" id="SSF53187">
    <property type="entry name" value="Zn-dependent exopeptidases"/>
    <property type="match status" value="1"/>
</dbReference>
<dbReference type="PROSITE" id="PS00758">
    <property type="entry name" value="ARGE_DAPE_CPG2_1"/>
    <property type="match status" value="1"/>
</dbReference>
<dbReference type="PROSITE" id="PS00759">
    <property type="entry name" value="ARGE_DAPE_CPG2_2"/>
    <property type="match status" value="1"/>
</dbReference>
<comment type="function">
    <text evidence="1">Catalyzes the hydrolysis of the amide bond of N(2)-acetylated L-amino acids. Cleaves the acetyl group from N-acetyl-L-ornithine to form L-ornithine, an intermediate in L-arginine biosynthesis pathway, and a branchpoint in the synthesis of polyamines.</text>
</comment>
<comment type="catalytic activity">
    <reaction evidence="1">
        <text>N(2)-acetyl-L-ornithine + H2O = L-ornithine + acetate</text>
        <dbReference type="Rhea" id="RHEA:15941"/>
        <dbReference type="ChEBI" id="CHEBI:15377"/>
        <dbReference type="ChEBI" id="CHEBI:30089"/>
        <dbReference type="ChEBI" id="CHEBI:46911"/>
        <dbReference type="ChEBI" id="CHEBI:57805"/>
        <dbReference type="EC" id="3.5.1.16"/>
    </reaction>
</comment>
<comment type="cofactor">
    <cofactor evidence="1">
        <name>Zn(2+)</name>
        <dbReference type="ChEBI" id="CHEBI:29105"/>
    </cofactor>
    <cofactor evidence="1">
        <name>Co(2+)</name>
        <dbReference type="ChEBI" id="CHEBI:48828"/>
    </cofactor>
    <text evidence="1">Binds 2 Zn(2+) or Co(2+) ions per subunit.</text>
</comment>
<comment type="cofactor">
    <cofactor evidence="1">
        <name>glutathione</name>
        <dbReference type="ChEBI" id="CHEBI:57925"/>
    </cofactor>
</comment>
<comment type="pathway">
    <text evidence="1">Amino-acid biosynthesis; L-arginine biosynthesis; L-ornithine from N(2)-acetyl-L-ornithine (linear): step 1/1.</text>
</comment>
<comment type="subunit">
    <text evidence="1">Homodimer.</text>
</comment>
<comment type="subcellular location">
    <subcellularLocation>
        <location evidence="1">Cytoplasm</location>
    </subcellularLocation>
</comment>
<comment type="similarity">
    <text evidence="1">Belongs to the peptidase M20A family. ArgE subfamily.</text>
</comment>
<sequence>MKIPEFKEYYQQLISTSSISSTDSSWDEGNAKVIHKLAQWCEDLGCEVEIEEIEKGKLNLLAKLGSGEGGLLLAGHTDTVPYDQGRWNYDPHTLTEANDRFYGLGTADMKGFFAFILEAIKNINWKDQSKPLYILATCDEETTMLGARHFASNTSIQPDYCIIGEPTNLMPIRGHKGHVANAVRVTGKSGHSSNPAYGVNALEIMNEIMFALMNLKNKLVKEYHNPGFSIPYPTLNLGHIHGGDSPNRICGCCELHYDVRPLPGISLDGLDNMLRDALKDVEEKWPGRIEITPLHEPIPGYECSADSPIVTSVAEICGQEVETVNYCTEAPFLQDLCPTLVLGPGSIEQAHQPDEFLAFSFIDPTINILSKLMYKHCF</sequence>
<organism>
    <name type="scientific">Aliivibrio salmonicida (strain LFI1238)</name>
    <name type="common">Vibrio salmonicida (strain LFI1238)</name>
    <dbReference type="NCBI Taxonomy" id="316275"/>
    <lineage>
        <taxon>Bacteria</taxon>
        <taxon>Pseudomonadati</taxon>
        <taxon>Pseudomonadota</taxon>
        <taxon>Gammaproteobacteria</taxon>
        <taxon>Vibrionales</taxon>
        <taxon>Vibrionaceae</taxon>
        <taxon>Aliivibrio</taxon>
    </lineage>
</organism>
<reference key="1">
    <citation type="journal article" date="2008" name="BMC Genomics">
        <title>The genome sequence of the fish pathogen Aliivibrio salmonicida strain LFI1238 shows extensive evidence of gene decay.</title>
        <authorList>
            <person name="Hjerde E."/>
            <person name="Lorentzen M.S."/>
            <person name="Holden M.T."/>
            <person name="Seeger K."/>
            <person name="Paulsen S."/>
            <person name="Bason N."/>
            <person name="Churcher C."/>
            <person name="Harris D."/>
            <person name="Norbertczak H."/>
            <person name="Quail M.A."/>
            <person name="Sanders S."/>
            <person name="Thurston S."/>
            <person name="Parkhill J."/>
            <person name="Willassen N.P."/>
            <person name="Thomson N.R."/>
        </authorList>
    </citation>
    <scope>NUCLEOTIDE SEQUENCE [LARGE SCALE GENOMIC DNA]</scope>
    <source>
        <strain>LFI1238</strain>
    </source>
</reference>
<proteinExistence type="inferred from homology"/>
<gene>
    <name evidence="1" type="primary">argE</name>
    <name type="ordered locus">VSAL_I2755</name>
</gene>
<feature type="chain" id="PRO_1000137060" description="Acetylornithine deacetylase">
    <location>
        <begin position="1"/>
        <end position="378"/>
    </location>
</feature>
<feature type="active site" evidence="1">
    <location>
        <position position="78"/>
    </location>
</feature>
<feature type="active site" evidence="1">
    <location>
        <position position="140"/>
    </location>
</feature>
<feature type="binding site" evidence="1">
    <location>
        <position position="76"/>
    </location>
    <ligand>
        <name>Zn(2+)</name>
        <dbReference type="ChEBI" id="CHEBI:29105"/>
        <label>1</label>
    </ligand>
</feature>
<feature type="binding site" evidence="1">
    <location>
        <position position="108"/>
    </location>
    <ligand>
        <name>Zn(2+)</name>
        <dbReference type="ChEBI" id="CHEBI:29105"/>
        <label>1</label>
    </ligand>
</feature>
<feature type="binding site" evidence="1">
    <location>
        <position position="108"/>
    </location>
    <ligand>
        <name>Zn(2+)</name>
        <dbReference type="ChEBI" id="CHEBI:29105"/>
        <label>2</label>
    </ligand>
</feature>
<feature type="binding site" evidence="1">
    <location>
        <position position="141"/>
    </location>
    <ligand>
        <name>Zn(2+)</name>
        <dbReference type="ChEBI" id="CHEBI:29105"/>
        <label>2</label>
    </ligand>
</feature>
<feature type="binding site" evidence="1">
    <location>
        <position position="165"/>
    </location>
    <ligand>
        <name>Zn(2+)</name>
        <dbReference type="ChEBI" id="CHEBI:29105"/>
        <label>1</label>
    </ligand>
</feature>
<feature type="binding site" evidence="1">
    <location>
        <position position="351"/>
    </location>
    <ligand>
        <name>Zn(2+)</name>
        <dbReference type="ChEBI" id="CHEBI:29105"/>
        <label>2</label>
    </ligand>
</feature>
<protein>
    <recommendedName>
        <fullName evidence="1">Acetylornithine deacetylase</fullName>
        <shortName evidence="1">AO</shortName>
        <shortName evidence="1">Acetylornithinase</shortName>
        <ecNumber evidence="1">3.5.1.16</ecNumber>
    </recommendedName>
    <alternativeName>
        <fullName evidence="1">N-acetylornithinase</fullName>
        <shortName evidence="1">NAO</shortName>
    </alternativeName>
</protein>
<keyword id="KW-0028">Amino-acid biosynthesis</keyword>
<keyword id="KW-0055">Arginine biosynthesis</keyword>
<keyword id="KW-0170">Cobalt</keyword>
<keyword id="KW-0963">Cytoplasm</keyword>
<keyword id="KW-0378">Hydrolase</keyword>
<keyword id="KW-0479">Metal-binding</keyword>
<keyword id="KW-0862">Zinc</keyword>
<evidence type="ECO:0000255" key="1">
    <source>
        <dbReference type="HAMAP-Rule" id="MF_01108"/>
    </source>
</evidence>